<keyword id="KW-0560">Oxidoreductase</keyword>
<keyword id="KW-0819">tRNA processing</keyword>
<protein>
    <recommendedName>
        <fullName evidence="2">tRNA uridine(34) hydroxylase</fullName>
        <ecNumber evidence="2">1.14.-.-</ecNumber>
    </recommendedName>
    <alternativeName>
        <fullName evidence="2">tRNA hydroxylation protein O</fullName>
    </alternativeName>
</protein>
<proteinExistence type="inferred from homology"/>
<comment type="function">
    <text evidence="1">Catalyzes oxygen-dependent 5-hydroxyuridine (ho5U) modification at position 34 in tRNAs, the first step in 5-carboxymethoxyuridine (cmo5U) biosynthesis. May be part of an alternate pathway, which is able to bypass cmo5U biogenesis in a subset of tRNAs under aerobic conditions.</text>
</comment>
<comment type="catalytic activity">
    <reaction evidence="2">
        <text>uridine(34) in tRNA + AH2 + O2 = 5-hydroxyuridine(34) in tRNA + A + H2O</text>
        <dbReference type="Rhea" id="RHEA:64224"/>
        <dbReference type="Rhea" id="RHEA-COMP:11727"/>
        <dbReference type="Rhea" id="RHEA-COMP:13381"/>
        <dbReference type="ChEBI" id="CHEBI:13193"/>
        <dbReference type="ChEBI" id="CHEBI:15377"/>
        <dbReference type="ChEBI" id="CHEBI:15379"/>
        <dbReference type="ChEBI" id="CHEBI:17499"/>
        <dbReference type="ChEBI" id="CHEBI:65315"/>
        <dbReference type="ChEBI" id="CHEBI:136877"/>
    </reaction>
</comment>
<comment type="similarity">
    <text evidence="2">Belongs to the TrhO family.</text>
</comment>
<sequence>MPVLHNRISNDALKAKMLAESEPRTTISFYKYFHIADPKVTRDALYQLFTALNVFGRVYLAHEGINAQISVPASNVETFRAQLYAFDPALEGLRLNIALDDDGKSFWVLRMKVRDRIVADGIDDPHFDASNVGEYLQAAEVNAMLDDPDALFIDMRNHYEYEVGHFENALEIPADTFREQLPKAVEMMQAHKDKKIVMYCTGGIRCEKASAWMKHNGFNKVWHIEGGIIEYARKARDQGLPVRFIGKNFVFDERMGERISDEIIAHCHQCGAPCDSHTNCKNDGCHLLFIQCPVCAEKYKGCCSEICCEESALPPDEQRRRRAGRENGNKIFNKSRGRLNTTLGIPDPTE</sequence>
<feature type="chain" id="PRO_1000013738" description="tRNA uridine(34) hydroxylase">
    <location>
        <begin position="1"/>
        <end position="350"/>
    </location>
</feature>
<feature type="domain" description="Rhodanese" evidence="2">
    <location>
        <begin position="146"/>
        <end position="240"/>
    </location>
</feature>
<feature type="active site" description="Cysteine persulfide intermediate" evidence="2">
    <location>
        <position position="200"/>
    </location>
</feature>
<dbReference type="EC" id="1.14.-.-" evidence="2"/>
<dbReference type="EMBL" id="CP000247">
    <property type="protein sequence ID" value="ABG69061.1"/>
    <property type="molecule type" value="Genomic_DNA"/>
</dbReference>
<dbReference type="RefSeq" id="WP_001298360.1">
    <property type="nucleotide sequence ID" value="NC_008253.1"/>
</dbReference>
<dbReference type="SMR" id="Q0TJ18"/>
<dbReference type="KEGG" id="ecp:ECP_1048"/>
<dbReference type="HOGENOM" id="CLU_038878_1_1_6"/>
<dbReference type="Proteomes" id="UP000009182">
    <property type="component" value="Chromosome"/>
</dbReference>
<dbReference type="GO" id="GO:0016705">
    <property type="term" value="F:oxidoreductase activity, acting on paired donors, with incorporation or reduction of molecular oxygen"/>
    <property type="evidence" value="ECO:0007669"/>
    <property type="project" value="UniProtKB-UniRule"/>
</dbReference>
<dbReference type="GO" id="GO:0006400">
    <property type="term" value="P:tRNA modification"/>
    <property type="evidence" value="ECO:0007669"/>
    <property type="project" value="UniProtKB-UniRule"/>
</dbReference>
<dbReference type="CDD" id="cd01518">
    <property type="entry name" value="RHOD_YceA"/>
    <property type="match status" value="1"/>
</dbReference>
<dbReference type="Gene3D" id="3.30.70.100">
    <property type="match status" value="1"/>
</dbReference>
<dbReference type="Gene3D" id="3.40.250.10">
    <property type="entry name" value="Rhodanese-like domain"/>
    <property type="match status" value="1"/>
</dbReference>
<dbReference type="HAMAP" id="MF_00469">
    <property type="entry name" value="TrhO"/>
    <property type="match status" value="1"/>
</dbReference>
<dbReference type="InterPro" id="IPR001763">
    <property type="entry name" value="Rhodanese-like_dom"/>
</dbReference>
<dbReference type="InterPro" id="IPR036873">
    <property type="entry name" value="Rhodanese-like_dom_sf"/>
</dbReference>
<dbReference type="InterPro" id="IPR022111">
    <property type="entry name" value="Rhodanese_C"/>
</dbReference>
<dbReference type="InterPro" id="IPR020936">
    <property type="entry name" value="TrhO"/>
</dbReference>
<dbReference type="InterPro" id="IPR040503">
    <property type="entry name" value="TRHO_N"/>
</dbReference>
<dbReference type="NCBIfam" id="NF001133">
    <property type="entry name" value="PRK00142.1-1"/>
    <property type="match status" value="1"/>
</dbReference>
<dbReference type="PANTHER" id="PTHR43846:SF1">
    <property type="entry name" value="TRNA URIDINE(34) HYDROXYLASE"/>
    <property type="match status" value="1"/>
</dbReference>
<dbReference type="PANTHER" id="PTHR43846">
    <property type="entry name" value="UPF0176 PROTEIN YCEA"/>
    <property type="match status" value="1"/>
</dbReference>
<dbReference type="Pfam" id="PF00581">
    <property type="entry name" value="Rhodanese"/>
    <property type="match status" value="1"/>
</dbReference>
<dbReference type="Pfam" id="PF12368">
    <property type="entry name" value="Rhodanese_C"/>
    <property type="match status" value="1"/>
</dbReference>
<dbReference type="Pfam" id="PF17773">
    <property type="entry name" value="UPF0176_N"/>
    <property type="match status" value="1"/>
</dbReference>
<dbReference type="SMART" id="SM00450">
    <property type="entry name" value="RHOD"/>
    <property type="match status" value="1"/>
</dbReference>
<dbReference type="SUPFAM" id="SSF52821">
    <property type="entry name" value="Rhodanese/Cell cycle control phosphatase"/>
    <property type="match status" value="1"/>
</dbReference>
<dbReference type="PROSITE" id="PS50206">
    <property type="entry name" value="RHODANESE_3"/>
    <property type="match status" value="1"/>
</dbReference>
<evidence type="ECO:0000250" key="1">
    <source>
        <dbReference type="UniProtKB" id="P24188"/>
    </source>
</evidence>
<evidence type="ECO:0000255" key="2">
    <source>
        <dbReference type="HAMAP-Rule" id="MF_00469"/>
    </source>
</evidence>
<organism>
    <name type="scientific">Escherichia coli O6:K15:H31 (strain 536 / UPEC)</name>
    <dbReference type="NCBI Taxonomy" id="362663"/>
    <lineage>
        <taxon>Bacteria</taxon>
        <taxon>Pseudomonadati</taxon>
        <taxon>Pseudomonadota</taxon>
        <taxon>Gammaproteobacteria</taxon>
        <taxon>Enterobacterales</taxon>
        <taxon>Enterobacteriaceae</taxon>
        <taxon>Escherichia</taxon>
    </lineage>
</organism>
<gene>
    <name evidence="2" type="primary">trhO</name>
    <name type="synonym">yceA</name>
    <name type="ordered locus">ECP_1048</name>
</gene>
<name>TRHO_ECOL5</name>
<reference key="1">
    <citation type="journal article" date="2006" name="Mol. Microbiol.">
        <title>Role of pathogenicity island-associated integrases in the genome plasticity of uropathogenic Escherichia coli strain 536.</title>
        <authorList>
            <person name="Hochhut B."/>
            <person name="Wilde C."/>
            <person name="Balling G."/>
            <person name="Middendorf B."/>
            <person name="Dobrindt U."/>
            <person name="Brzuszkiewicz E."/>
            <person name="Gottschalk G."/>
            <person name="Carniel E."/>
            <person name="Hacker J."/>
        </authorList>
    </citation>
    <scope>NUCLEOTIDE SEQUENCE [LARGE SCALE GENOMIC DNA]</scope>
    <source>
        <strain>536 / UPEC</strain>
    </source>
</reference>
<accession>Q0TJ18</accession>